<protein>
    <recommendedName>
        <fullName>Probable casein kinase I homolog ECU03_0910</fullName>
        <ecNumber>2.7.11.1</ecNumber>
    </recommendedName>
</protein>
<gene>
    <name type="ordered locus">ECU03_0910</name>
</gene>
<keyword id="KW-0067">ATP-binding</keyword>
<keyword id="KW-0227">DNA damage</keyword>
<keyword id="KW-0234">DNA repair</keyword>
<keyword id="KW-0418">Kinase</keyword>
<keyword id="KW-0547">Nucleotide-binding</keyword>
<keyword id="KW-0539">Nucleus</keyword>
<keyword id="KW-1185">Reference proteome</keyword>
<keyword id="KW-0723">Serine/threonine-protein kinase</keyword>
<keyword id="KW-0808">Transferase</keyword>
<proteinExistence type="inferred from homology"/>
<feature type="chain" id="PRO_0000384416" description="Probable casein kinase I homolog ECU03_0910">
    <location>
        <begin position="1"/>
        <end position="304"/>
    </location>
</feature>
<feature type="domain" description="Protein kinase" evidence="2">
    <location>
        <begin position="8"/>
        <end position="304"/>
    </location>
</feature>
<feature type="active site" description="Proton acceptor" evidence="2 3">
    <location>
        <position position="129"/>
    </location>
</feature>
<feature type="binding site" evidence="2">
    <location>
        <begin position="14"/>
        <end position="22"/>
    </location>
    <ligand>
        <name>ATP</name>
        <dbReference type="ChEBI" id="CHEBI:30616"/>
    </ligand>
</feature>
<feature type="binding site" evidence="2">
    <location>
        <position position="37"/>
    </location>
    <ligand>
        <name>ATP</name>
        <dbReference type="ChEBI" id="CHEBI:30616"/>
    </ligand>
</feature>
<dbReference type="EC" id="2.7.11.1"/>
<dbReference type="EMBL" id="AL590443">
    <property type="protein sequence ID" value="CAD26235.2"/>
    <property type="molecule type" value="Genomic_DNA"/>
</dbReference>
<dbReference type="RefSeq" id="NP_597600.2">
    <property type="nucleotide sequence ID" value="NM_001040964.2"/>
</dbReference>
<dbReference type="SMR" id="Q8SS96"/>
<dbReference type="FunCoup" id="Q8SS96">
    <property type="interactions" value="261"/>
</dbReference>
<dbReference type="STRING" id="284813.Q8SS96"/>
<dbReference type="GeneID" id="858762"/>
<dbReference type="KEGG" id="ecu:ECU03_0910"/>
<dbReference type="VEuPathDB" id="MicrosporidiaDB:ECU03_0910"/>
<dbReference type="HOGENOM" id="CLU_019279_2_0_1"/>
<dbReference type="InParanoid" id="Q8SS96"/>
<dbReference type="OrthoDB" id="5800476at2759"/>
<dbReference type="Proteomes" id="UP000000819">
    <property type="component" value="Chromosome III"/>
</dbReference>
<dbReference type="GO" id="GO:0005634">
    <property type="term" value="C:nucleus"/>
    <property type="evidence" value="ECO:0007669"/>
    <property type="project" value="UniProtKB-SubCell"/>
</dbReference>
<dbReference type="GO" id="GO:0005524">
    <property type="term" value="F:ATP binding"/>
    <property type="evidence" value="ECO:0007669"/>
    <property type="project" value="UniProtKB-KW"/>
</dbReference>
<dbReference type="GO" id="GO:0106310">
    <property type="term" value="F:protein serine kinase activity"/>
    <property type="evidence" value="ECO:0007669"/>
    <property type="project" value="RHEA"/>
</dbReference>
<dbReference type="GO" id="GO:0004674">
    <property type="term" value="F:protein serine/threonine kinase activity"/>
    <property type="evidence" value="ECO:0007669"/>
    <property type="project" value="UniProtKB-KW"/>
</dbReference>
<dbReference type="GO" id="GO:0006281">
    <property type="term" value="P:DNA repair"/>
    <property type="evidence" value="ECO:0007669"/>
    <property type="project" value="UniProtKB-KW"/>
</dbReference>
<dbReference type="CDD" id="cd14016">
    <property type="entry name" value="STKc_CK1"/>
    <property type="match status" value="1"/>
</dbReference>
<dbReference type="Gene3D" id="1.10.510.10">
    <property type="entry name" value="Transferase(Phosphotransferase) domain 1"/>
    <property type="match status" value="1"/>
</dbReference>
<dbReference type="InterPro" id="IPR050235">
    <property type="entry name" value="CK1_Ser-Thr_kinase"/>
</dbReference>
<dbReference type="InterPro" id="IPR011009">
    <property type="entry name" value="Kinase-like_dom_sf"/>
</dbReference>
<dbReference type="InterPro" id="IPR000719">
    <property type="entry name" value="Prot_kinase_dom"/>
</dbReference>
<dbReference type="InterPro" id="IPR008271">
    <property type="entry name" value="Ser/Thr_kinase_AS"/>
</dbReference>
<dbReference type="PANTHER" id="PTHR11909">
    <property type="entry name" value="CASEIN KINASE-RELATED"/>
    <property type="match status" value="1"/>
</dbReference>
<dbReference type="Pfam" id="PF00069">
    <property type="entry name" value="Pkinase"/>
    <property type="match status" value="1"/>
</dbReference>
<dbReference type="SMART" id="SM00220">
    <property type="entry name" value="S_TKc"/>
    <property type="match status" value="1"/>
</dbReference>
<dbReference type="SUPFAM" id="SSF56112">
    <property type="entry name" value="Protein kinase-like (PK-like)"/>
    <property type="match status" value="1"/>
</dbReference>
<dbReference type="PROSITE" id="PS50011">
    <property type="entry name" value="PROTEIN_KINASE_DOM"/>
    <property type="match status" value="1"/>
</dbReference>
<dbReference type="PROSITE" id="PS00108">
    <property type="entry name" value="PROTEIN_KINASE_ST"/>
    <property type="match status" value="1"/>
</dbReference>
<evidence type="ECO:0000250" key="1"/>
<evidence type="ECO:0000255" key="2">
    <source>
        <dbReference type="PROSITE-ProRule" id="PRU00159"/>
    </source>
</evidence>
<evidence type="ECO:0000255" key="3">
    <source>
        <dbReference type="PROSITE-ProRule" id="PRU10027"/>
    </source>
</evidence>
<evidence type="ECO:0000305" key="4"/>
<organism>
    <name type="scientific">Encephalitozoon cuniculi (strain GB-M1)</name>
    <name type="common">Microsporidian parasite</name>
    <dbReference type="NCBI Taxonomy" id="284813"/>
    <lineage>
        <taxon>Eukaryota</taxon>
        <taxon>Fungi</taxon>
        <taxon>Fungi incertae sedis</taxon>
        <taxon>Microsporidia</taxon>
        <taxon>Unikaryonidae</taxon>
        <taxon>Encephalitozoon</taxon>
    </lineage>
</organism>
<comment type="function">
    <text evidence="1">Involved in DNA repair. May regulate the activity of protein(s) involved in double strand break repair caused by gamma rays (By similarity).</text>
</comment>
<comment type="catalytic activity">
    <reaction>
        <text>L-seryl-[protein] + ATP = O-phospho-L-seryl-[protein] + ADP + H(+)</text>
        <dbReference type="Rhea" id="RHEA:17989"/>
        <dbReference type="Rhea" id="RHEA-COMP:9863"/>
        <dbReference type="Rhea" id="RHEA-COMP:11604"/>
        <dbReference type="ChEBI" id="CHEBI:15378"/>
        <dbReference type="ChEBI" id="CHEBI:29999"/>
        <dbReference type="ChEBI" id="CHEBI:30616"/>
        <dbReference type="ChEBI" id="CHEBI:83421"/>
        <dbReference type="ChEBI" id="CHEBI:456216"/>
        <dbReference type="EC" id="2.7.11.1"/>
    </reaction>
</comment>
<comment type="catalytic activity">
    <reaction>
        <text>L-threonyl-[protein] + ATP = O-phospho-L-threonyl-[protein] + ADP + H(+)</text>
        <dbReference type="Rhea" id="RHEA:46608"/>
        <dbReference type="Rhea" id="RHEA-COMP:11060"/>
        <dbReference type="Rhea" id="RHEA-COMP:11605"/>
        <dbReference type="ChEBI" id="CHEBI:15378"/>
        <dbReference type="ChEBI" id="CHEBI:30013"/>
        <dbReference type="ChEBI" id="CHEBI:30616"/>
        <dbReference type="ChEBI" id="CHEBI:61977"/>
        <dbReference type="ChEBI" id="CHEBI:456216"/>
        <dbReference type="EC" id="2.7.11.1"/>
    </reaction>
</comment>
<comment type="subcellular location">
    <subcellularLocation>
        <location evidence="4">Nucleus</location>
    </subcellularLocation>
</comment>
<comment type="similarity">
    <text evidence="4">Belongs to the protein kinase superfamily. CK1 Ser/Thr protein kinase family. Casein kinase I subfamily.</text>
</comment>
<sequence length="304" mass="35525">MTTEIRNIKLVQKIASGAFGDIFIGQNTVTNQTVAVKLEKKAHYGQLKHEYGVYKALGGTRTPRIYEYGKILYENVYVNGLVMELMGKSLEQLFVTCSRRFSLKTVLMLGERMVDNVEYLHHRNYVHRDIKPDNFVFDVQGDRLYLIDYGLAKEFRNPMTFKHREMRTDKSLTGTARYASLRTHQGYEQSRRDDLESVGFCMVYFLKGRLPWQGLKAKTKQEKYDRIRESKESISLYELCMGLPKEIHSFCFYVRNLGYEDMPNYAYLRTLLSDALRQRGLRSDGVFDWMVRTPSDSMGDLEIL</sequence>
<accession>Q8SS96</accession>
<name>KC11_ENCCU</name>
<reference key="1">
    <citation type="journal article" date="2001" name="Nature">
        <title>Genome sequence and gene compaction of the eukaryote parasite Encephalitozoon cuniculi.</title>
        <authorList>
            <person name="Katinka M.D."/>
            <person name="Duprat S."/>
            <person name="Cornillot E."/>
            <person name="Metenier G."/>
            <person name="Thomarat F."/>
            <person name="Prensier G."/>
            <person name="Barbe V."/>
            <person name="Peyretaillade E."/>
            <person name="Brottier P."/>
            <person name="Wincker P."/>
            <person name="Delbac F."/>
            <person name="El Alaoui H."/>
            <person name="Peyret P."/>
            <person name="Saurin W."/>
            <person name="Gouy M."/>
            <person name="Weissenbach J."/>
            <person name="Vivares C.P."/>
        </authorList>
    </citation>
    <scope>NUCLEOTIDE SEQUENCE [LARGE SCALE GENOMIC DNA]</scope>
    <source>
        <strain>GB-M1</strain>
    </source>
</reference>
<reference key="2">
    <citation type="journal article" date="2009" name="BMC Genomics">
        <title>Identification of transcriptional signals in Encephalitozoon cuniculi widespread among Microsporidia phylum: support for accurate structural genome annotation.</title>
        <authorList>
            <person name="Peyretaillade E."/>
            <person name="Goncalves O."/>
            <person name="Terrat S."/>
            <person name="Dugat-Bony E."/>
            <person name="Wincker P."/>
            <person name="Cornman R.S."/>
            <person name="Evans J.D."/>
            <person name="Delbac F."/>
            <person name="Peyret P."/>
        </authorList>
    </citation>
    <scope>GENOME REANNOTATION</scope>
    <source>
        <strain>GB-M1</strain>
    </source>
</reference>
<reference key="3">
    <citation type="journal article" date="2007" name="BMC Genomics">
        <title>The complement of protein kinases of the microsporidium Encephalitozoon cuniculi in relation to those of Saccharomyces cerevisiae and Schizosaccharomyces pombe.</title>
        <authorList>
            <person name="Miranda-Saavedra D."/>
            <person name="Stark M.J.R."/>
            <person name="Packer J.C."/>
            <person name="Vivares C.P."/>
            <person name="Doerig C."/>
            <person name="Barton G.J."/>
        </authorList>
    </citation>
    <scope>PREDICTION OF FUNCTION</scope>
</reference>